<proteinExistence type="inferred from homology"/>
<evidence type="ECO:0000255" key="1">
    <source>
        <dbReference type="HAMAP-Rule" id="MF_01306"/>
    </source>
</evidence>
<evidence type="ECO:0000256" key="2">
    <source>
        <dbReference type="SAM" id="MobiDB-lite"/>
    </source>
</evidence>
<evidence type="ECO:0000305" key="3"/>
<dbReference type="EMBL" id="CP000927">
    <property type="protein sequence ID" value="ABZ72641.1"/>
    <property type="molecule type" value="Genomic_DNA"/>
</dbReference>
<dbReference type="SMR" id="B0T660"/>
<dbReference type="STRING" id="366602.Caul_3514"/>
<dbReference type="KEGG" id="cak:Caul_3514"/>
<dbReference type="eggNOG" id="COG0522">
    <property type="taxonomic scope" value="Bacteria"/>
</dbReference>
<dbReference type="HOGENOM" id="CLU_092403_0_0_5"/>
<dbReference type="OrthoDB" id="9803672at2"/>
<dbReference type="GO" id="GO:0015935">
    <property type="term" value="C:small ribosomal subunit"/>
    <property type="evidence" value="ECO:0007669"/>
    <property type="project" value="InterPro"/>
</dbReference>
<dbReference type="GO" id="GO:0019843">
    <property type="term" value="F:rRNA binding"/>
    <property type="evidence" value="ECO:0007669"/>
    <property type="project" value="UniProtKB-UniRule"/>
</dbReference>
<dbReference type="GO" id="GO:0003735">
    <property type="term" value="F:structural constituent of ribosome"/>
    <property type="evidence" value="ECO:0007669"/>
    <property type="project" value="InterPro"/>
</dbReference>
<dbReference type="GO" id="GO:0042274">
    <property type="term" value="P:ribosomal small subunit biogenesis"/>
    <property type="evidence" value="ECO:0007669"/>
    <property type="project" value="TreeGrafter"/>
</dbReference>
<dbReference type="GO" id="GO:0006412">
    <property type="term" value="P:translation"/>
    <property type="evidence" value="ECO:0007669"/>
    <property type="project" value="UniProtKB-UniRule"/>
</dbReference>
<dbReference type="CDD" id="cd00165">
    <property type="entry name" value="S4"/>
    <property type="match status" value="1"/>
</dbReference>
<dbReference type="FunFam" id="3.10.290.10:FF:000001">
    <property type="entry name" value="30S ribosomal protein S4"/>
    <property type="match status" value="1"/>
</dbReference>
<dbReference type="Gene3D" id="1.10.1050.10">
    <property type="entry name" value="Ribosomal Protein S4 Delta 41, Chain A, domain 1"/>
    <property type="match status" value="1"/>
</dbReference>
<dbReference type="Gene3D" id="3.10.290.10">
    <property type="entry name" value="RNA-binding S4 domain"/>
    <property type="match status" value="1"/>
</dbReference>
<dbReference type="HAMAP" id="MF_01306_B">
    <property type="entry name" value="Ribosomal_uS4_B"/>
    <property type="match status" value="1"/>
</dbReference>
<dbReference type="InterPro" id="IPR022801">
    <property type="entry name" value="Ribosomal_uS4"/>
</dbReference>
<dbReference type="InterPro" id="IPR005709">
    <property type="entry name" value="Ribosomal_uS4_bac-type"/>
</dbReference>
<dbReference type="InterPro" id="IPR018079">
    <property type="entry name" value="Ribosomal_uS4_CS"/>
</dbReference>
<dbReference type="InterPro" id="IPR001912">
    <property type="entry name" value="Ribosomal_uS4_N"/>
</dbReference>
<dbReference type="InterPro" id="IPR002942">
    <property type="entry name" value="S4_RNA-bd"/>
</dbReference>
<dbReference type="InterPro" id="IPR036986">
    <property type="entry name" value="S4_RNA-bd_sf"/>
</dbReference>
<dbReference type="NCBIfam" id="NF003717">
    <property type="entry name" value="PRK05327.1"/>
    <property type="match status" value="1"/>
</dbReference>
<dbReference type="NCBIfam" id="TIGR01017">
    <property type="entry name" value="rpsD_bact"/>
    <property type="match status" value="1"/>
</dbReference>
<dbReference type="PANTHER" id="PTHR11831">
    <property type="entry name" value="30S 40S RIBOSOMAL PROTEIN"/>
    <property type="match status" value="1"/>
</dbReference>
<dbReference type="PANTHER" id="PTHR11831:SF4">
    <property type="entry name" value="SMALL RIBOSOMAL SUBUNIT PROTEIN US4M"/>
    <property type="match status" value="1"/>
</dbReference>
<dbReference type="Pfam" id="PF00163">
    <property type="entry name" value="Ribosomal_S4"/>
    <property type="match status" value="1"/>
</dbReference>
<dbReference type="Pfam" id="PF01479">
    <property type="entry name" value="S4"/>
    <property type="match status" value="1"/>
</dbReference>
<dbReference type="SMART" id="SM01390">
    <property type="entry name" value="Ribosomal_S4"/>
    <property type="match status" value="1"/>
</dbReference>
<dbReference type="SMART" id="SM00363">
    <property type="entry name" value="S4"/>
    <property type="match status" value="1"/>
</dbReference>
<dbReference type="SUPFAM" id="SSF55174">
    <property type="entry name" value="Alpha-L RNA-binding motif"/>
    <property type="match status" value="1"/>
</dbReference>
<dbReference type="PROSITE" id="PS00632">
    <property type="entry name" value="RIBOSOMAL_S4"/>
    <property type="match status" value="1"/>
</dbReference>
<dbReference type="PROSITE" id="PS50889">
    <property type="entry name" value="S4"/>
    <property type="match status" value="1"/>
</dbReference>
<keyword id="KW-0687">Ribonucleoprotein</keyword>
<keyword id="KW-0689">Ribosomal protein</keyword>
<keyword id="KW-0694">RNA-binding</keyword>
<keyword id="KW-0699">rRNA-binding</keyword>
<name>RS4_CAUSK</name>
<sequence>MSKRHSAKYKIDRRMGENLWGRPKSPVNQRSYGPGQHGQRRKQKVSDFGLQLRAKQKLKGYYGNLTEKQFSRTYEEAARRKGNTAENLVGLLESRLDAIVYRAKFVPTVFAARQFVNHGHVTVNGKRVNIASYRCKIGDVIAVREKSRNMALVLEAVASSERDFCEYITVDAKGLEASFIRVPELSEVPYPVKMEPNLVVEFYAS</sequence>
<comment type="function">
    <text evidence="1">One of the primary rRNA binding proteins, it binds directly to 16S rRNA where it nucleates assembly of the body of the 30S subunit.</text>
</comment>
<comment type="function">
    <text evidence="1">With S5 and S12 plays an important role in translational accuracy.</text>
</comment>
<comment type="subunit">
    <text evidence="1">Part of the 30S ribosomal subunit. Contacts protein S5. The interaction surface between S4 and S5 is involved in control of translational fidelity.</text>
</comment>
<comment type="similarity">
    <text evidence="1">Belongs to the universal ribosomal protein uS4 family.</text>
</comment>
<organism>
    <name type="scientific">Caulobacter sp. (strain K31)</name>
    <dbReference type="NCBI Taxonomy" id="366602"/>
    <lineage>
        <taxon>Bacteria</taxon>
        <taxon>Pseudomonadati</taxon>
        <taxon>Pseudomonadota</taxon>
        <taxon>Alphaproteobacteria</taxon>
        <taxon>Caulobacterales</taxon>
        <taxon>Caulobacteraceae</taxon>
        <taxon>Caulobacter</taxon>
    </lineage>
</organism>
<reference key="1">
    <citation type="submission" date="2008-01" db="EMBL/GenBank/DDBJ databases">
        <title>Complete sequence of chromosome of Caulobacter sp. K31.</title>
        <authorList>
            <consortium name="US DOE Joint Genome Institute"/>
            <person name="Copeland A."/>
            <person name="Lucas S."/>
            <person name="Lapidus A."/>
            <person name="Barry K."/>
            <person name="Glavina del Rio T."/>
            <person name="Dalin E."/>
            <person name="Tice H."/>
            <person name="Pitluck S."/>
            <person name="Bruce D."/>
            <person name="Goodwin L."/>
            <person name="Thompson L.S."/>
            <person name="Brettin T."/>
            <person name="Detter J.C."/>
            <person name="Han C."/>
            <person name="Schmutz J."/>
            <person name="Larimer F."/>
            <person name="Land M."/>
            <person name="Hauser L."/>
            <person name="Kyrpides N."/>
            <person name="Kim E."/>
            <person name="Stephens C."/>
            <person name="Richardson P."/>
        </authorList>
    </citation>
    <scope>NUCLEOTIDE SEQUENCE [LARGE SCALE GENOMIC DNA]</scope>
    <source>
        <strain>K31</strain>
    </source>
</reference>
<accession>B0T660</accession>
<gene>
    <name evidence="1" type="primary">rpsD</name>
    <name type="ordered locus">Caul_3514</name>
</gene>
<protein>
    <recommendedName>
        <fullName evidence="1">Small ribosomal subunit protein uS4</fullName>
    </recommendedName>
    <alternativeName>
        <fullName evidence="3">30S ribosomal protein S4</fullName>
    </alternativeName>
</protein>
<feature type="chain" id="PRO_1000085964" description="Small ribosomal subunit protein uS4">
    <location>
        <begin position="1"/>
        <end position="205"/>
    </location>
</feature>
<feature type="domain" description="S4 RNA-binding" evidence="1">
    <location>
        <begin position="94"/>
        <end position="154"/>
    </location>
</feature>
<feature type="region of interest" description="Disordered" evidence="2">
    <location>
        <begin position="1"/>
        <end position="46"/>
    </location>
</feature>